<reference key="1">
    <citation type="journal article" date="2002" name="Proc. Natl. Acad. Sci. U.S.A.">
        <title>Genome sequence and comparative microarray analysis of serotype M18 group A Streptococcus strains associated with acute rheumatic fever outbreaks.</title>
        <authorList>
            <person name="Smoot J.C."/>
            <person name="Barbian K.D."/>
            <person name="Van Gompel J.J."/>
            <person name="Smoot L.M."/>
            <person name="Chaussee M.S."/>
            <person name="Sylva G.L."/>
            <person name="Sturdevant D.E."/>
            <person name="Ricklefs S.M."/>
            <person name="Porcella S.F."/>
            <person name="Parkins L.D."/>
            <person name="Beres S.B."/>
            <person name="Campbell D.S."/>
            <person name="Smith T.M."/>
            <person name="Zhang Q."/>
            <person name="Kapur V."/>
            <person name="Daly J.A."/>
            <person name="Veasy L.G."/>
            <person name="Musser J.M."/>
        </authorList>
    </citation>
    <scope>NUCLEOTIDE SEQUENCE [LARGE SCALE GENOMIC DNA]</scope>
    <source>
        <strain>MGAS8232</strain>
    </source>
</reference>
<keyword id="KW-0687">Ribonucleoprotein</keyword>
<keyword id="KW-0689">Ribosomal protein</keyword>
<keyword id="KW-0694">RNA-binding</keyword>
<keyword id="KW-0699">rRNA-binding</keyword>
<keyword id="KW-0820">tRNA-binding</keyword>
<comment type="function">
    <text evidence="1">This is one of the proteins that bind and probably mediate the attachment of the 5S RNA into the large ribosomal subunit, where it forms part of the central protuberance. In the 70S ribosome it contacts protein S13 of the 30S subunit (bridge B1b), connecting the 2 subunits; this bridge is implicated in subunit movement. Contacts the P site tRNA; the 5S rRNA and some of its associated proteins might help stabilize positioning of ribosome-bound tRNAs.</text>
</comment>
<comment type="subunit">
    <text evidence="1">Part of the 50S ribosomal subunit; part of the 5S rRNA/L5/L18/L25 subcomplex. Contacts the 5S rRNA and the P site tRNA. Forms a bridge to the 30S subunit in the 70S ribosome.</text>
</comment>
<comment type="similarity">
    <text evidence="1">Belongs to the universal ribosomal protein uL5 family.</text>
</comment>
<name>RL5_STRP8</name>
<organism>
    <name type="scientific">Streptococcus pyogenes serotype M18 (strain MGAS8232)</name>
    <dbReference type="NCBI Taxonomy" id="186103"/>
    <lineage>
        <taxon>Bacteria</taxon>
        <taxon>Bacillati</taxon>
        <taxon>Bacillota</taxon>
        <taxon>Bacilli</taxon>
        <taxon>Lactobacillales</taxon>
        <taxon>Streptococcaceae</taxon>
        <taxon>Streptococcus</taxon>
    </lineage>
</organism>
<accession>Q7CNP5</accession>
<evidence type="ECO:0000255" key="1">
    <source>
        <dbReference type="HAMAP-Rule" id="MF_01333"/>
    </source>
</evidence>
<evidence type="ECO:0000305" key="2"/>
<sequence length="180" mass="19815">MANRLKEKYTNEVIPALTEKFNYTSVMAVPKVEKIVLNMGVGDAVSNAKNLEKAAAELALISGQKPLITKAKKSIAGFRLREGVAIGAKVTLRGERMYEFLDKLVSVSLPRVRDFHGVPTKSFDGRGNYTLGVKEQLIFPEISFDDVDKVRGLDIVIVTTANTDEESRELLKGLGMPFAK</sequence>
<dbReference type="EMBL" id="AE009949">
    <property type="protein sequence ID" value="AAL96888.1"/>
    <property type="molecule type" value="Genomic_DNA"/>
</dbReference>
<dbReference type="RefSeq" id="WP_002986634.1">
    <property type="nucleotide sequence ID" value="NC_003485.1"/>
</dbReference>
<dbReference type="SMR" id="Q7CNP5"/>
<dbReference type="GeneID" id="69900038"/>
<dbReference type="KEGG" id="spm:spyM18_0064"/>
<dbReference type="HOGENOM" id="CLU_061015_2_1_9"/>
<dbReference type="GO" id="GO:1990904">
    <property type="term" value="C:ribonucleoprotein complex"/>
    <property type="evidence" value="ECO:0007669"/>
    <property type="project" value="UniProtKB-KW"/>
</dbReference>
<dbReference type="GO" id="GO:0005840">
    <property type="term" value="C:ribosome"/>
    <property type="evidence" value="ECO:0007669"/>
    <property type="project" value="UniProtKB-KW"/>
</dbReference>
<dbReference type="GO" id="GO:0019843">
    <property type="term" value="F:rRNA binding"/>
    <property type="evidence" value="ECO:0007669"/>
    <property type="project" value="UniProtKB-UniRule"/>
</dbReference>
<dbReference type="GO" id="GO:0003735">
    <property type="term" value="F:structural constituent of ribosome"/>
    <property type="evidence" value="ECO:0007669"/>
    <property type="project" value="InterPro"/>
</dbReference>
<dbReference type="GO" id="GO:0000049">
    <property type="term" value="F:tRNA binding"/>
    <property type="evidence" value="ECO:0007669"/>
    <property type="project" value="UniProtKB-UniRule"/>
</dbReference>
<dbReference type="GO" id="GO:0006412">
    <property type="term" value="P:translation"/>
    <property type="evidence" value="ECO:0007669"/>
    <property type="project" value="UniProtKB-UniRule"/>
</dbReference>
<dbReference type="FunFam" id="3.30.1440.10:FF:000001">
    <property type="entry name" value="50S ribosomal protein L5"/>
    <property type="match status" value="1"/>
</dbReference>
<dbReference type="Gene3D" id="3.30.1440.10">
    <property type="match status" value="1"/>
</dbReference>
<dbReference type="HAMAP" id="MF_01333_B">
    <property type="entry name" value="Ribosomal_uL5_B"/>
    <property type="match status" value="1"/>
</dbReference>
<dbReference type="InterPro" id="IPR002132">
    <property type="entry name" value="Ribosomal_uL5"/>
</dbReference>
<dbReference type="InterPro" id="IPR020930">
    <property type="entry name" value="Ribosomal_uL5_bac-type"/>
</dbReference>
<dbReference type="InterPro" id="IPR031309">
    <property type="entry name" value="Ribosomal_uL5_C"/>
</dbReference>
<dbReference type="InterPro" id="IPR020929">
    <property type="entry name" value="Ribosomal_uL5_CS"/>
</dbReference>
<dbReference type="InterPro" id="IPR022803">
    <property type="entry name" value="Ribosomal_uL5_dom_sf"/>
</dbReference>
<dbReference type="InterPro" id="IPR031310">
    <property type="entry name" value="Ribosomal_uL5_N"/>
</dbReference>
<dbReference type="NCBIfam" id="NF000585">
    <property type="entry name" value="PRK00010.1"/>
    <property type="match status" value="1"/>
</dbReference>
<dbReference type="PANTHER" id="PTHR11994">
    <property type="entry name" value="60S RIBOSOMAL PROTEIN L11-RELATED"/>
    <property type="match status" value="1"/>
</dbReference>
<dbReference type="Pfam" id="PF00281">
    <property type="entry name" value="Ribosomal_L5"/>
    <property type="match status" value="1"/>
</dbReference>
<dbReference type="Pfam" id="PF00673">
    <property type="entry name" value="Ribosomal_L5_C"/>
    <property type="match status" value="1"/>
</dbReference>
<dbReference type="PIRSF" id="PIRSF002161">
    <property type="entry name" value="Ribosomal_L5"/>
    <property type="match status" value="1"/>
</dbReference>
<dbReference type="SUPFAM" id="SSF55282">
    <property type="entry name" value="RL5-like"/>
    <property type="match status" value="1"/>
</dbReference>
<dbReference type="PROSITE" id="PS00358">
    <property type="entry name" value="RIBOSOMAL_L5"/>
    <property type="match status" value="1"/>
</dbReference>
<protein>
    <recommendedName>
        <fullName evidence="1">Large ribosomal subunit protein uL5</fullName>
    </recommendedName>
    <alternativeName>
        <fullName evidence="2">50S ribosomal protein L5</fullName>
    </alternativeName>
</protein>
<feature type="chain" id="PRO_0000125006" description="Large ribosomal subunit protein uL5">
    <location>
        <begin position="1"/>
        <end position="180"/>
    </location>
</feature>
<proteinExistence type="inferred from homology"/>
<gene>
    <name evidence="1" type="primary">rplE</name>
    <name type="ordered locus">spyM18_0064</name>
</gene>